<protein>
    <recommendedName>
        <fullName evidence="1">Sugar fermentation stimulation protein homolog</fullName>
    </recommendedName>
</protein>
<proteinExistence type="inferred from homology"/>
<evidence type="ECO:0000255" key="1">
    <source>
        <dbReference type="HAMAP-Rule" id="MF_00095"/>
    </source>
</evidence>
<sequence>MILPRPLYSGTLIRRYQRFLADVRLDDGTVVTAHCPNSGSMKGCCQPGSAVFLSLSDNPKRRLAYTWELVMADGYWAGINTGLPNRLVREGIENGTVAELLGYERIRPEVRYGTNSRVDLLLEGPGRCWVEVKNVTLVEGGTALFPDAVTERGQKHLRELMEVVRQGDRGVIFFVVQRGDGSAVAPADAIDPVYGRLLRQAVTAGVEALAYRALVTPEEIRLTERLPVLAGE</sequence>
<organism>
    <name type="scientific">Geobacter sulfurreducens (strain ATCC 51573 / DSM 12127 / PCA)</name>
    <dbReference type="NCBI Taxonomy" id="243231"/>
    <lineage>
        <taxon>Bacteria</taxon>
        <taxon>Pseudomonadati</taxon>
        <taxon>Thermodesulfobacteriota</taxon>
        <taxon>Desulfuromonadia</taxon>
        <taxon>Geobacterales</taxon>
        <taxon>Geobacteraceae</taxon>
        <taxon>Geobacter</taxon>
    </lineage>
</organism>
<name>SFSA_GEOSL</name>
<accession>P61664</accession>
<comment type="similarity">
    <text evidence="1">Belongs to the SfsA family.</text>
</comment>
<gene>
    <name evidence="1" type="primary">sfsA</name>
    <name type="ordered locus">GSU2716</name>
</gene>
<feature type="chain" id="PRO_0000152287" description="Sugar fermentation stimulation protein homolog">
    <location>
        <begin position="1"/>
        <end position="232"/>
    </location>
</feature>
<keyword id="KW-1185">Reference proteome</keyword>
<dbReference type="EMBL" id="AE017180">
    <property type="protein sequence ID" value="AAR36088.1"/>
    <property type="molecule type" value="Genomic_DNA"/>
</dbReference>
<dbReference type="RefSeq" id="NP_953761.1">
    <property type="nucleotide sequence ID" value="NC_002939.5"/>
</dbReference>
<dbReference type="RefSeq" id="WP_010943351.1">
    <property type="nucleotide sequence ID" value="NC_002939.5"/>
</dbReference>
<dbReference type="SMR" id="P61664"/>
<dbReference type="FunCoup" id="P61664">
    <property type="interactions" value="18"/>
</dbReference>
<dbReference type="STRING" id="243231.GSU2716"/>
<dbReference type="DNASU" id="2687468"/>
<dbReference type="EnsemblBacteria" id="AAR36088">
    <property type="protein sequence ID" value="AAR36088"/>
    <property type="gene ID" value="GSU2716"/>
</dbReference>
<dbReference type="KEGG" id="gsu:GSU2716"/>
<dbReference type="PATRIC" id="fig|243231.5.peg.2743"/>
<dbReference type="eggNOG" id="COG1489">
    <property type="taxonomic scope" value="Bacteria"/>
</dbReference>
<dbReference type="HOGENOM" id="CLU_052299_2_0_7"/>
<dbReference type="InParanoid" id="P61664"/>
<dbReference type="OrthoDB" id="9802365at2"/>
<dbReference type="Proteomes" id="UP000000577">
    <property type="component" value="Chromosome"/>
</dbReference>
<dbReference type="GO" id="GO:0003677">
    <property type="term" value="F:DNA binding"/>
    <property type="evidence" value="ECO:0000318"/>
    <property type="project" value="GO_Central"/>
</dbReference>
<dbReference type="CDD" id="cd22359">
    <property type="entry name" value="SfsA-like_bacterial"/>
    <property type="match status" value="1"/>
</dbReference>
<dbReference type="FunFam" id="2.40.50.580:FF:000001">
    <property type="entry name" value="Sugar fermentation stimulation protein A"/>
    <property type="match status" value="1"/>
</dbReference>
<dbReference type="FunFam" id="3.40.1350.60:FF:000001">
    <property type="entry name" value="Sugar fermentation stimulation protein A"/>
    <property type="match status" value="1"/>
</dbReference>
<dbReference type="Gene3D" id="2.40.50.580">
    <property type="match status" value="1"/>
</dbReference>
<dbReference type="Gene3D" id="3.40.1350.60">
    <property type="match status" value="1"/>
</dbReference>
<dbReference type="HAMAP" id="MF_00095">
    <property type="entry name" value="SfsA"/>
    <property type="match status" value="1"/>
</dbReference>
<dbReference type="InterPro" id="IPR018488">
    <property type="entry name" value="cNMP-bd_CS"/>
</dbReference>
<dbReference type="InterPro" id="IPR000595">
    <property type="entry name" value="cNMP-bd_dom"/>
</dbReference>
<dbReference type="InterPro" id="IPR005224">
    <property type="entry name" value="SfsA"/>
</dbReference>
<dbReference type="InterPro" id="IPR040452">
    <property type="entry name" value="SfsA_C"/>
</dbReference>
<dbReference type="InterPro" id="IPR041465">
    <property type="entry name" value="SfsA_N"/>
</dbReference>
<dbReference type="NCBIfam" id="TIGR00230">
    <property type="entry name" value="sfsA"/>
    <property type="match status" value="1"/>
</dbReference>
<dbReference type="PANTHER" id="PTHR30545">
    <property type="entry name" value="SUGAR FERMENTATION STIMULATION PROTEIN A"/>
    <property type="match status" value="1"/>
</dbReference>
<dbReference type="PANTHER" id="PTHR30545:SF2">
    <property type="entry name" value="SUGAR FERMENTATION STIMULATION PROTEIN A"/>
    <property type="match status" value="1"/>
</dbReference>
<dbReference type="Pfam" id="PF03749">
    <property type="entry name" value="SfsA"/>
    <property type="match status" value="1"/>
</dbReference>
<dbReference type="Pfam" id="PF17746">
    <property type="entry name" value="SfsA_N"/>
    <property type="match status" value="1"/>
</dbReference>
<reference key="1">
    <citation type="journal article" date="2003" name="Science">
        <title>Genome of Geobacter sulfurreducens: metal reduction in subsurface environments.</title>
        <authorList>
            <person name="Methe B.A."/>
            <person name="Nelson K.E."/>
            <person name="Eisen J.A."/>
            <person name="Paulsen I.T."/>
            <person name="Nelson W.C."/>
            <person name="Heidelberg J.F."/>
            <person name="Wu D."/>
            <person name="Wu M."/>
            <person name="Ward N.L."/>
            <person name="Beanan M.J."/>
            <person name="Dodson R.J."/>
            <person name="Madupu R."/>
            <person name="Brinkac L.M."/>
            <person name="Daugherty S.C."/>
            <person name="DeBoy R.T."/>
            <person name="Durkin A.S."/>
            <person name="Gwinn M.L."/>
            <person name="Kolonay J.F."/>
            <person name="Sullivan S.A."/>
            <person name="Haft D.H."/>
            <person name="Selengut J."/>
            <person name="Davidsen T.M."/>
            <person name="Zafar N."/>
            <person name="White O."/>
            <person name="Tran B."/>
            <person name="Romero C."/>
            <person name="Forberger H.A."/>
            <person name="Weidman J.F."/>
            <person name="Khouri H.M."/>
            <person name="Feldblyum T.V."/>
            <person name="Utterback T.R."/>
            <person name="Van Aken S.E."/>
            <person name="Lovley D.R."/>
            <person name="Fraser C.M."/>
        </authorList>
    </citation>
    <scope>NUCLEOTIDE SEQUENCE [LARGE SCALE GENOMIC DNA]</scope>
    <source>
        <strain>ATCC 51573 / DSM 12127 / PCA</strain>
    </source>
</reference>